<evidence type="ECO:0000255" key="1">
    <source>
        <dbReference type="HAMAP-Rule" id="MF_01201"/>
    </source>
</evidence>
<name>ALR_NITV9</name>
<comment type="function">
    <text evidence="1">Catalyzes the interconversion of L-alanine and D-alanine. May also act on other amino acids.</text>
</comment>
<comment type="catalytic activity">
    <reaction evidence="1">
        <text>L-alanine = D-alanine</text>
        <dbReference type="Rhea" id="RHEA:20249"/>
        <dbReference type="ChEBI" id="CHEBI:57416"/>
        <dbReference type="ChEBI" id="CHEBI:57972"/>
        <dbReference type="EC" id="5.1.1.1"/>
    </reaction>
</comment>
<comment type="cofactor">
    <cofactor evidence="1">
        <name>pyridoxal 5'-phosphate</name>
        <dbReference type="ChEBI" id="CHEBI:597326"/>
    </cofactor>
</comment>
<comment type="pathway">
    <text evidence="1">Amino-acid biosynthesis; D-alanine biosynthesis; D-alanine from L-alanine: step 1/1.</text>
</comment>
<comment type="similarity">
    <text evidence="1">Belongs to the alanine racemase family.</text>
</comment>
<gene>
    <name type="primary">alr</name>
    <name type="ordered locus">DvMF_1349</name>
</gene>
<dbReference type="EC" id="5.1.1.1" evidence="1"/>
<dbReference type="EMBL" id="CP001197">
    <property type="protein sequence ID" value="ACL08298.1"/>
    <property type="molecule type" value="Genomic_DNA"/>
</dbReference>
<dbReference type="SMR" id="B8DRL1"/>
<dbReference type="STRING" id="883.DvMF_1349"/>
<dbReference type="KEGG" id="dvm:DvMF_1349"/>
<dbReference type="eggNOG" id="COG0787">
    <property type="taxonomic scope" value="Bacteria"/>
</dbReference>
<dbReference type="HOGENOM" id="CLU_028393_2_2_7"/>
<dbReference type="OrthoDB" id="9813814at2"/>
<dbReference type="UniPathway" id="UPA00042">
    <property type="reaction ID" value="UER00497"/>
</dbReference>
<dbReference type="GO" id="GO:0005829">
    <property type="term" value="C:cytosol"/>
    <property type="evidence" value="ECO:0007669"/>
    <property type="project" value="TreeGrafter"/>
</dbReference>
<dbReference type="GO" id="GO:0008784">
    <property type="term" value="F:alanine racemase activity"/>
    <property type="evidence" value="ECO:0007669"/>
    <property type="project" value="UniProtKB-UniRule"/>
</dbReference>
<dbReference type="GO" id="GO:0030170">
    <property type="term" value="F:pyridoxal phosphate binding"/>
    <property type="evidence" value="ECO:0007669"/>
    <property type="project" value="UniProtKB-UniRule"/>
</dbReference>
<dbReference type="GO" id="GO:0030632">
    <property type="term" value="P:D-alanine biosynthetic process"/>
    <property type="evidence" value="ECO:0007669"/>
    <property type="project" value="UniProtKB-UniRule"/>
</dbReference>
<dbReference type="CDD" id="cd00430">
    <property type="entry name" value="PLPDE_III_AR"/>
    <property type="match status" value="1"/>
</dbReference>
<dbReference type="FunFam" id="3.20.20.10:FF:000002">
    <property type="entry name" value="Alanine racemase"/>
    <property type="match status" value="1"/>
</dbReference>
<dbReference type="Gene3D" id="3.20.20.10">
    <property type="entry name" value="Alanine racemase"/>
    <property type="match status" value="1"/>
</dbReference>
<dbReference type="Gene3D" id="2.40.37.10">
    <property type="entry name" value="Lyase, Ornithine Decarboxylase, Chain A, domain 1"/>
    <property type="match status" value="1"/>
</dbReference>
<dbReference type="HAMAP" id="MF_01201">
    <property type="entry name" value="Ala_racemase"/>
    <property type="match status" value="1"/>
</dbReference>
<dbReference type="InterPro" id="IPR000821">
    <property type="entry name" value="Ala_racemase"/>
</dbReference>
<dbReference type="InterPro" id="IPR009006">
    <property type="entry name" value="Ala_racemase/Decarboxylase_C"/>
</dbReference>
<dbReference type="InterPro" id="IPR011079">
    <property type="entry name" value="Ala_racemase_C"/>
</dbReference>
<dbReference type="InterPro" id="IPR001608">
    <property type="entry name" value="Ala_racemase_N"/>
</dbReference>
<dbReference type="InterPro" id="IPR020622">
    <property type="entry name" value="Ala_racemase_pyridoxalP-BS"/>
</dbReference>
<dbReference type="InterPro" id="IPR029066">
    <property type="entry name" value="PLP-binding_barrel"/>
</dbReference>
<dbReference type="NCBIfam" id="TIGR00492">
    <property type="entry name" value="alr"/>
    <property type="match status" value="1"/>
</dbReference>
<dbReference type="PANTHER" id="PTHR30511">
    <property type="entry name" value="ALANINE RACEMASE"/>
    <property type="match status" value="1"/>
</dbReference>
<dbReference type="PANTHER" id="PTHR30511:SF0">
    <property type="entry name" value="ALANINE RACEMASE, CATABOLIC-RELATED"/>
    <property type="match status" value="1"/>
</dbReference>
<dbReference type="Pfam" id="PF00842">
    <property type="entry name" value="Ala_racemase_C"/>
    <property type="match status" value="1"/>
</dbReference>
<dbReference type="Pfam" id="PF01168">
    <property type="entry name" value="Ala_racemase_N"/>
    <property type="match status" value="1"/>
</dbReference>
<dbReference type="PRINTS" id="PR00992">
    <property type="entry name" value="ALARACEMASE"/>
</dbReference>
<dbReference type="SMART" id="SM01005">
    <property type="entry name" value="Ala_racemase_C"/>
    <property type="match status" value="1"/>
</dbReference>
<dbReference type="SUPFAM" id="SSF50621">
    <property type="entry name" value="Alanine racemase C-terminal domain-like"/>
    <property type="match status" value="1"/>
</dbReference>
<dbReference type="SUPFAM" id="SSF51419">
    <property type="entry name" value="PLP-binding barrel"/>
    <property type="match status" value="1"/>
</dbReference>
<dbReference type="PROSITE" id="PS00395">
    <property type="entry name" value="ALANINE_RACEMASE"/>
    <property type="match status" value="1"/>
</dbReference>
<accession>B8DRL1</accession>
<organism>
    <name type="scientific">Nitratidesulfovibrio vulgaris (strain DSM 19637 / Miyazaki F)</name>
    <name type="common">Desulfovibrio vulgaris</name>
    <dbReference type="NCBI Taxonomy" id="883"/>
    <lineage>
        <taxon>Bacteria</taxon>
        <taxon>Pseudomonadati</taxon>
        <taxon>Thermodesulfobacteriota</taxon>
        <taxon>Desulfovibrionia</taxon>
        <taxon>Desulfovibrionales</taxon>
        <taxon>Desulfovibrionaceae</taxon>
        <taxon>Nitratidesulfovibrio</taxon>
    </lineage>
</organism>
<sequence>MSIAYNKIAVRVRLGALRRNFETLRRMSPAAMPVIKSDAYGHGLLPVARTLEAAGADAFAAGTVGECAQLRDGGIPGRIVALLGATDAADAECCVARSIVPAVYSADQLEMLAGRAAPGQQVDIALKFDTGMARLGFSEADLPALLDRLHARPMLRPVLVMSHLAVSDDPSRSDFTRQQGEAFGRILAGVRADWPAAQGSLANSAALLAHPELHFDVQRPGIALYGANPLRGTAQEHLGDGLQPAMDVAAPILQVHPLPAGRSISYGRTFTAPRDMTVAIVATGYADAYSRGLSGKGAMTVHGRRVPILGRVCMQMTAVDVTDVPGVAAGDDAYLLGGPGEALTPDELADLWGTISYEVLCLLGMNPRTHRE</sequence>
<feature type="chain" id="PRO_1000164593" description="Alanine racemase">
    <location>
        <begin position="1"/>
        <end position="372"/>
    </location>
</feature>
<feature type="active site" description="Proton acceptor; specific for D-alanine" evidence="1">
    <location>
        <position position="36"/>
    </location>
</feature>
<feature type="active site" description="Proton acceptor; specific for L-alanine" evidence="1">
    <location>
        <position position="266"/>
    </location>
</feature>
<feature type="binding site" evidence="1">
    <location>
        <position position="134"/>
    </location>
    <ligand>
        <name>substrate</name>
    </ligand>
</feature>
<feature type="binding site" evidence="1">
    <location>
        <position position="314"/>
    </location>
    <ligand>
        <name>substrate</name>
    </ligand>
</feature>
<feature type="modified residue" description="N6-(pyridoxal phosphate)lysine" evidence="1">
    <location>
        <position position="36"/>
    </location>
</feature>
<keyword id="KW-0413">Isomerase</keyword>
<keyword id="KW-0663">Pyridoxal phosphate</keyword>
<protein>
    <recommendedName>
        <fullName evidence="1">Alanine racemase</fullName>
        <ecNumber evidence="1">5.1.1.1</ecNumber>
    </recommendedName>
</protein>
<proteinExistence type="inferred from homology"/>
<reference key="1">
    <citation type="submission" date="2008-10" db="EMBL/GenBank/DDBJ databases">
        <title>Complete sequence of Desulfovibrio vulgaris str. 'Miyazaki F'.</title>
        <authorList>
            <person name="Lucas S."/>
            <person name="Copeland A."/>
            <person name="Lapidus A."/>
            <person name="Glavina del Rio T."/>
            <person name="Dalin E."/>
            <person name="Tice H."/>
            <person name="Bruce D."/>
            <person name="Goodwin L."/>
            <person name="Pitluck S."/>
            <person name="Sims D."/>
            <person name="Brettin T."/>
            <person name="Detter J.C."/>
            <person name="Han C."/>
            <person name="Larimer F."/>
            <person name="Land M."/>
            <person name="Hauser L."/>
            <person name="Kyrpides N."/>
            <person name="Mikhailova N."/>
            <person name="Hazen T.C."/>
            <person name="Richardson P."/>
        </authorList>
    </citation>
    <scope>NUCLEOTIDE SEQUENCE [LARGE SCALE GENOMIC DNA]</scope>
    <source>
        <strain>DSM 19637 / Miyazaki F</strain>
    </source>
</reference>